<comment type="function">
    <text evidence="1">May act as a substrate-specific adapter of an E3 ubiquitin-protein ligase complex (CUL3-RBX1-BTB) which mediates the ubiquitination and subsequent proteasomal degradation of target proteins.</text>
</comment>
<comment type="pathway">
    <text>Protein modification; protein ubiquitination.</text>
</comment>
<comment type="domain">
    <text evidence="2">The BTB/POZ domain mediates the interaction with some component of ubiquitin ligase complexes.</text>
</comment>
<keyword id="KW-1185">Reference proteome</keyword>
<keyword id="KW-0833">Ubl conjugation pathway</keyword>
<sequence length="215" mass="24483">MATQTNQDHFSGDLRRSWQKIGKLTYGSRQWIVMMASRSAVLKKMLESDEFKTSAKQVGTITLLEMKQEELEAFVEFLYSDGSMLSSKVKQHARALYRAADKYEILRLRELCRSELISSLNSTNSLNLLELAQIPFDKVLNDAALSYIKTNELMFPSFDEFKLFVDNYPNLAVEVMMASLTRTPSTSCSRCGLITYHNQTGTSCCSCGFDYPRRS</sequence>
<gene>
    <name type="ordered locus">At2g05330</name>
    <name type="ORF">F5G3.23</name>
</gene>
<protein>
    <recommendedName>
        <fullName>Putative BTB/POZ domain-containing protein At2g05330</fullName>
    </recommendedName>
</protein>
<evidence type="ECO:0000250" key="1"/>
<evidence type="ECO:0000269" key="2">
    <source>
    </source>
</evidence>
<organism>
    <name type="scientific">Arabidopsis thaliana</name>
    <name type="common">Mouse-ear cress</name>
    <dbReference type="NCBI Taxonomy" id="3702"/>
    <lineage>
        <taxon>Eukaryota</taxon>
        <taxon>Viridiplantae</taxon>
        <taxon>Streptophyta</taxon>
        <taxon>Embryophyta</taxon>
        <taxon>Tracheophyta</taxon>
        <taxon>Spermatophyta</taxon>
        <taxon>Magnoliopsida</taxon>
        <taxon>eudicotyledons</taxon>
        <taxon>Gunneridae</taxon>
        <taxon>Pentapetalae</taxon>
        <taxon>rosids</taxon>
        <taxon>malvids</taxon>
        <taxon>Brassicales</taxon>
        <taxon>Brassicaceae</taxon>
        <taxon>Camelineae</taxon>
        <taxon>Arabidopsis</taxon>
    </lineage>
</organism>
<reference key="1">
    <citation type="journal article" date="1999" name="Nature">
        <title>Sequence and analysis of chromosome 2 of the plant Arabidopsis thaliana.</title>
        <authorList>
            <person name="Lin X."/>
            <person name="Kaul S."/>
            <person name="Rounsley S.D."/>
            <person name="Shea T.P."/>
            <person name="Benito M.-I."/>
            <person name="Town C.D."/>
            <person name="Fujii C.Y."/>
            <person name="Mason T.M."/>
            <person name="Bowman C.L."/>
            <person name="Barnstead M.E."/>
            <person name="Feldblyum T.V."/>
            <person name="Buell C.R."/>
            <person name="Ketchum K.A."/>
            <person name="Lee J.J."/>
            <person name="Ronning C.M."/>
            <person name="Koo H.L."/>
            <person name="Moffat K.S."/>
            <person name="Cronin L.A."/>
            <person name="Shen M."/>
            <person name="Pai G."/>
            <person name="Van Aken S."/>
            <person name="Umayam L."/>
            <person name="Tallon L.J."/>
            <person name="Gill J.E."/>
            <person name="Adams M.D."/>
            <person name="Carrera A.J."/>
            <person name="Creasy T.H."/>
            <person name="Goodman H.M."/>
            <person name="Somerville C.R."/>
            <person name="Copenhaver G.P."/>
            <person name="Preuss D."/>
            <person name="Nierman W.C."/>
            <person name="White O."/>
            <person name="Eisen J.A."/>
            <person name="Salzberg S.L."/>
            <person name="Fraser C.M."/>
            <person name="Venter J.C."/>
        </authorList>
    </citation>
    <scope>NUCLEOTIDE SEQUENCE [LARGE SCALE GENOMIC DNA]</scope>
    <source>
        <strain>cv. Columbia</strain>
    </source>
</reference>
<reference key="2">
    <citation type="journal article" date="2017" name="Plant J.">
        <title>Araport11: a complete reannotation of the Arabidopsis thaliana reference genome.</title>
        <authorList>
            <person name="Cheng C.Y."/>
            <person name="Krishnakumar V."/>
            <person name="Chan A.P."/>
            <person name="Thibaud-Nissen F."/>
            <person name="Schobel S."/>
            <person name="Town C.D."/>
        </authorList>
    </citation>
    <scope>GENOME REANNOTATION</scope>
    <source>
        <strain>cv. Columbia</strain>
    </source>
</reference>
<reference key="3">
    <citation type="journal article" date="2005" name="J. Biol. Chem.">
        <title>Cullins 3a and 3b assemble with members of the broad complex/tramtrack/bric-a-brac (BTB) protein family to form essential ubiquitin-protein ligases (E3s) in Arabidopsis.</title>
        <authorList>
            <person name="Gingerich D.J."/>
            <person name="Gagne J.M."/>
            <person name="Salter D.W."/>
            <person name="Hellmann H."/>
            <person name="Estelle M."/>
            <person name="Ma L."/>
            <person name="Vierstra R.D."/>
        </authorList>
    </citation>
    <scope>DOMAIN BTB</scope>
</reference>
<accession>Q9SJ29</accession>
<name>Y2533_ARATH</name>
<feature type="chain" id="PRO_0000405997" description="Putative BTB/POZ domain-containing protein At2g05330">
    <location>
        <begin position="1"/>
        <end position="215"/>
    </location>
</feature>
<feature type="domain" description="BTB">
    <location>
        <begin position="17"/>
        <end position="87"/>
    </location>
</feature>
<proteinExistence type="inferred from homology"/>
<dbReference type="EMBL" id="AC007018">
    <property type="protein sequence ID" value="AAD29070.1"/>
    <property type="molecule type" value="Genomic_DNA"/>
</dbReference>
<dbReference type="EMBL" id="CP002685">
    <property type="protein sequence ID" value="AEC05917.1"/>
    <property type="molecule type" value="Genomic_DNA"/>
</dbReference>
<dbReference type="PIR" id="C84467">
    <property type="entry name" value="C84467"/>
</dbReference>
<dbReference type="RefSeq" id="NP_178602.1">
    <property type="nucleotide sequence ID" value="NM_126557.2"/>
</dbReference>
<dbReference type="SMR" id="Q9SJ29"/>
<dbReference type="BioGRID" id="481">
    <property type="interactions" value="7"/>
</dbReference>
<dbReference type="FunCoup" id="Q9SJ29">
    <property type="interactions" value="105"/>
</dbReference>
<dbReference type="IntAct" id="Q9SJ29">
    <property type="interactions" value="8"/>
</dbReference>
<dbReference type="STRING" id="3702.Q9SJ29"/>
<dbReference type="PaxDb" id="3702-AT2G05330.1"/>
<dbReference type="EnsemblPlants" id="AT2G05330.1">
    <property type="protein sequence ID" value="AT2G05330.1"/>
    <property type="gene ID" value="AT2G05330"/>
</dbReference>
<dbReference type="GeneID" id="815081"/>
<dbReference type="Gramene" id="AT2G05330.1">
    <property type="protein sequence ID" value="AT2G05330.1"/>
    <property type="gene ID" value="AT2G05330"/>
</dbReference>
<dbReference type="KEGG" id="ath:AT2G05330"/>
<dbReference type="Araport" id="AT2G05330"/>
<dbReference type="TAIR" id="AT2G05330"/>
<dbReference type="eggNOG" id="KOG1987">
    <property type="taxonomic scope" value="Eukaryota"/>
</dbReference>
<dbReference type="HOGENOM" id="CLU_004253_9_1_1"/>
<dbReference type="InParanoid" id="Q9SJ29"/>
<dbReference type="OMA" id="CEPLNND"/>
<dbReference type="PhylomeDB" id="Q9SJ29"/>
<dbReference type="UniPathway" id="UPA00143"/>
<dbReference type="PRO" id="PR:Q9SJ29"/>
<dbReference type="Proteomes" id="UP000006548">
    <property type="component" value="Chromosome 2"/>
</dbReference>
<dbReference type="ExpressionAtlas" id="Q9SJ29">
    <property type="expression patterns" value="baseline and differential"/>
</dbReference>
<dbReference type="GO" id="GO:0016567">
    <property type="term" value="P:protein ubiquitination"/>
    <property type="evidence" value="ECO:0007669"/>
    <property type="project" value="UniProtKB-UniPathway"/>
</dbReference>
<dbReference type="CDD" id="cd18186">
    <property type="entry name" value="BTB_POZ_ZBTB_KLHL-like"/>
    <property type="match status" value="1"/>
</dbReference>
<dbReference type="Gene3D" id="3.30.710.10">
    <property type="entry name" value="Potassium Channel Kv1.1, Chain A"/>
    <property type="match status" value="1"/>
</dbReference>
<dbReference type="InterPro" id="IPR044784">
    <property type="entry name" value="At1g01640-like"/>
</dbReference>
<dbReference type="InterPro" id="IPR000210">
    <property type="entry name" value="BTB/POZ_dom"/>
</dbReference>
<dbReference type="InterPro" id="IPR011333">
    <property type="entry name" value="SKP1/BTB/POZ_sf"/>
</dbReference>
<dbReference type="PANTHER" id="PTHR47274">
    <property type="entry name" value="BTB/POZ DOMAIN CONTAINING PROTEIN, EXPRESSED-RELATED"/>
    <property type="match status" value="1"/>
</dbReference>
<dbReference type="PANTHER" id="PTHR47274:SF15">
    <property type="entry name" value="GENOME ASSEMBLY, CHROMOSOME: A05"/>
    <property type="match status" value="1"/>
</dbReference>
<dbReference type="Pfam" id="PF00651">
    <property type="entry name" value="BTB"/>
    <property type="match status" value="1"/>
</dbReference>
<dbReference type="SMART" id="SM00225">
    <property type="entry name" value="BTB"/>
    <property type="match status" value="1"/>
</dbReference>
<dbReference type="SUPFAM" id="SSF54695">
    <property type="entry name" value="POZ domain"/>
    <property type="match status" value="1"/>
</dbReference>